<accession>A3PN13</accession>
<protein>
    <recommendedName>
        <fullName evidence="1">Succinate--CoA ligase [ADP-forming] subunit beta</fullName>
        <ecNumber evidence="1">6.2.1.5</ecNumber>
    </recommendedName>
    <alternativeName>
        <fullName evidence="1">Succinyl-CoA synthetase subunit beta</fullName>
        <shortName evidence="1">SCS-beta</shortName>
    </alternativeName>
</protein>
<organism>
    <name type="scientific">Cereibacter sphaeroides (strain ATCC 17029 / ATH 2.4.9)</name>
    <name type="common">Rhodobacter sphaeroides</name>
    <dbReference type="NCBI Taxonomy" id="349101"/>
    <lineage>
        <taxon>Bacteria</taxon>
        <taxon>Pseudomonadati</taxon>
        <taxon>Pseudomonadota</taxon>
        <taxon>Alphaproteobacteria</taxon>
        <taxon>Rhodobacterales</taxon>
        <taxon>Paracoccaceae</taxon>
        <taxon>Cereibacter</taxon>
    </lineage>
</organism>
<gene>
    <name evidence="1" type="primary">sucC</name>
    <name type="ordered locus">Rsph17029_2627</name>
</gene>
<keyword id="KW-0067">ATP-binding</keyword>
<keyword id="KW-0436">Ligase</keyword>
<keyword id="KW-0460">Magnesium</keyword>
<keyword id="KW-0479">Metal-binding</keyword>
<keyword id="KW-0547">Nucleotide-binding</keyword>
<keyword id="KW-0816">Tricarboxylic acid cycle</keyword>
<dbReference type="EC" id="6.2.1.5" evidence="1"/>
<dbReference type="EMBL" id="CP000577">
    <property type="protein sequence ID" value="ABN77729.1"/>
    <property type="molecule type" value="Genomic_DNA"/>
</dbReference>
<dbReference type="RefSeq" id="WP_002721255.1">
    <property type="nucleotide sequence ID" value="NC_009049.1"/>
</dbReference>
<dbReference type="SMR" id="A3PN13"/>
<dbReference type="GeneID" id="67447738"/>
<dbReference type="KEGG" id="rsh:Rsph17029_2627"/>
<dbReference type="HOGENOM" id="CLU_037430_0_2_5"/>
<dbReference type="UniPathway" id="UPA00223">
    <property type="reaction ID" value="UER00999"/>
</dbReference>
<dbReference type="GO" id="GO:0005829">
    <property type="term" value="C:cytosol"/>
    <property type="evidence" value="ECO:0007669"/>
    <property type="project" value="TreeGrafter"/>
</dbReference>
<dbReference type="GO" id="GO:0042709">
    <property type="term" value="C:succinate-CoA ligase complex"/>
    <property type="evidence" value="ECO:0007669"/>
    <property type="project" value="TreeGrafter"/>
</dbReference>
<dbReference type="GO" id="GO:0005524">
    <property type="term" value="F:ATP binding"/>
    <property type="evidence" value="ECO:0007669"/>
    <property type="project" value="UniProtKB-UniRule"/>
</dbReference>
<dbReference type="GO" id="GO:0000287">
    <property type="term" value="F:magnesium ion binding"/>
    <property type="evidence" value="ECO:0007669"/>
    <property type="project" value="UniProtKB-UniRule"/>
</dbReference>
<dbReference type="GO" id="GO:0004775">
    <property type="term" value="F:succinate-CoA ligase (ADP-forming) activity"/>
    <property type="evidence" value="ECO:0007669"/>
    <property type="project" value="UniProtKB-UniRule"/>
</dbReference>
<dbReference type="GO" id="GO:0004776">
    <property type="term" value="F:succinate-CoA ligase (GDP-forming) activity"/>
    <property type="evidence" value="ECO:0007669"/>
    <property type="project" value="RHEA"/>
</dbReference>
<dbReference type="GO" id="GO:0006104">
    <property type="term" value="P:succinyl-CoA metabolic process"/>
    <property type="evidence" value="ECO:0007669"/>
    <property type="project" value="TreeGrafter"/>
</dbReference>
<dbReference type="GO" id="GO:0006099">
    <property type="term" value="P:tricarboxylic acid cycle"/>
    <property type="evidence" value="ECO:0007669"/>
    <property type="project" value="UniProtKB-UniRule"/>
</dbReference>
<dbReference type="FunFam" id="3.30.1490.20:FF:000002">
    <property type="entry name" value="Succinate--CoA ligase [ADP-forming] subunit beta"/>
    <property type="match status" value="1"/>
</dbReference>
<dbReference type="FunFam" id="3.30.470.20:FF:000002">
    <property type="entry name" value="Succinate--CoA ligase [ADP-forming] subunit beta"/>
    <property type="match status" value="1"/>
</dbReference>
<dbReference type="FunFam" id="3.40.50.261:FF:000001">
    <property type="entry name" value="Succinate--CoA ligase [ADP-forming] subunit beta"/>
    <property type="match status" value="1"/>
</dbReference>
<dbReference type="Gene3D" id="3.30.1490.20">
    <property type="entry name" value="ATP-grasp fold, A domain"/>
    <property type="match status" value="1"/>
</dbReference>
<dbReference type="Gene3D" id="3.30.470.20">
    <property type="entry name" value="ATP-grasp fold, B domain"/>
    <property type="match status" value="1"/>
</dbReference>
<dbReference type="Gene3D" id="3.40.50.261">
    <property type="entry name" value="Succinyl-CoA synthetase domains"/>
    <property type="match status" value="1"/>
</dbReference>
<dbReference type="HAMAP" id="MF_00558">
    <property type="entry name" value="Succ_CoA_beta"/>
    <property type="match status" value="1"/>
</dbReference>
<dbReference type="InterPro" id="IPR011761">
    <property type="entry name" value="ATP-grasp"/>
</dbReference>
<dbReference type="InterPro" id="IPR013650">
    <property type="entry name" value="ATP-grasp_succ-CoA_synth-type"/>
</dbReference>
<dbReference type="InterPro" id="IPR013815">
    <property type="entry name" value="ATP_grasp_subdomain_1"/>
</dbReference>
<dbReference type="InterPro" id="IPR017866">
    <property type="entry name" value="Succ-CoA_synthase_bsu_CS"/>
</dbReference>
<dbReference type="InterPro" id="IPR005811">
    <property type="entry name" value="SUCC_ACL_C"/>
</dbReference>
<dbReference type="InterPro" id="IPR005809">
    <property type="entry name" value="Succ_CoA_ligase-like_bsu"/>
</dbReference>
<dbReference type="InterPro" id="IPR016102">
    <property type="entry name" value="Succinyl-CoA_synth-like"/>
</dbReference>
<dbReference type="NCBIfam" id="NF001913">
    <property type="entry name" value="PRK00696.1"/>
    <property type="match status" value="1"/>
</dbReference>
<dbReference type="NCBIfam" id="TIGR01016">
    <property type="entry name" value="sucCoAbeta"/>
    <property type="match status" value="1"/>
</dbReference>
<dbReference type="PANTHER" id="PTHR11815:SF10">
    <property type="entry name" value="SUCCINATE--COA LIGASE [GDP-FORMING] SUBUNIT BETA, MITOCHONDRIAL"/>
    <property type="match status" value="1"/>
</dbReference>
<dbReference type="PANTHER" id="PTHR11815">
    <property type="entry name" value="SUCCINYL-COA SYNTHETASE BETA CHAIN"/>
    <property type="match status" value="1"/>
</dbReference>
<dbReference type="Pfam" id="PF08442">
    <property type="entry name" value="ATP-grasp_2"/>
    <property type="match status" value="1"/>
</dbReference>
<dbReference type="Pfam" id="PF00549">
    <property type="entry name" value="Ligase_CoA"/>
    <property type="match status" value="1"/>
</dbReference>
<dbReference type="PIRSF" id="PIRSF001554">
    <property type="entry name" value="SucCS_beta"/>
    <property type="match status" value="1"/>
</dbReference>
<dbReference type="SUPFAM" id="SSF56059">
    <property type="entry name" value="Glutathione synthetase ATP-binding domain-like"/>
    <property type="match status" value="1"/>
</dbReference>
<dbReference type="SUPFAM" id="SSF52210">
    <property type="entry name" value="Succinyl-CoA synthetase domains"/>
    <property type="match status" value="1"/>
</dbReference>
<dbReference type="PROSITE" id="PS50975">
    <property type="entry name" value="ATP_GRASP"/>
    <property type="match status" value="1"/>
</dbReference>
<dbReference type="PROSITE" id="PS01217">
    <property type="entry name" value="SUCCINYL_COA_LIG_3"/>
    <property type="match status" value="1"/>
</dbReference>
<feature type="chain" id="PRO_1000082195" description="Succinate--CoA ligase [ADP-forming] subunit beta">
    <location>
        <begin position="1"/>
        <end position="397"/>
    </location>
</feature>
<feature type="domain" description="ATP-grasp" evidence="1">
    <location>
        <begin position="9"/>
        <end position="254"/>
    </location>
</feature>
<feature type="binding site" evidence="1">
    <location>
        <position position="46"/>
    </location>
    <ligand>
        <name>ATP</name>
        <dbReference type="ChEBI" id="CHEBI:30616"/>
    </ligand>
</feature>
<feature type="binding site" evidence="1">
    <location>
        <begin position="53"/>
        <end position="55"/>
    </location>
    <ligand>
        <name>ATP</name>
        <dbReference type="ChEBI" id="CHEBI:30616"/>
    </ligand>
</feature>
<feature type="binding site" evidence="1">
    <location>
        <position position="109"/>
    </location>
    <ligand>
        <name>ATP</name>
        <dbReference type="ChEBI" id="CHEBI:30616"/>
    </ligand>
</feature>
<feature type="binding site" evidence="1">
    <location>
        <position position="112"/>
    </location>
    <ligand>
        <name>ATP</name>
        <dbReference type="ChEBI" id="CHEBI:30616"/>
    </ligand>
</feature>
<feature type="binding site" evidence="1">
    <location>
        <position position="117"/>
    </location>
    <ligand>
        <name>ATP</name>
        <dbReference type="ChEBI" id="CHEBI:30616"/>
    </ligand>
</feature>
<feature type="binding site" evidence="1">
    <location>
        <position position="209"/>
    </location>
    <ligand>
        <name>Mg(2+)</name>
        <dbReference type="ChEBI" id="CHEBI:18420"/>
    </ligand>
</feature>
<feature type="binding site" evidence="1">
    <location>
        <position position="223"/>
    </location>
    <ligand>
        <name>Mg(2+)</name>
        <dbReference type="ChEBI" id="CHEBI:18420"/>
    </ligand>
</feature>
<feature type="binding site" evidence="1">
    <location>
        <position position="274"/>
    </location>
    <ligand>
        <name>substrate</name>
        <note>ligand shared with subunit alpha</note>
    </ligand>
</feature>
<feature type="binding site" evidence="1">
    <location>
        <begin position="331"/>
        <end position="333"/>
    </location>
    <ligand>
        <name>substrate</name>
        <note>ligand shared with subunit alpha</note>
    </ligand>
</feature>
<sequence length="397" mass="42228">MNIHEYQAKALLRSYGAPVSDGRVVLKADEAKSAAGELGGPLWVVKAQIHAGGRGKGKFKEPEAGEKGGVRLAKSVGEAAELAKQMLGRTLVTHQTGPAGKQVNRIYIEEGSDIARELYLALLVDRGTSRISFVVSTEGGMDIEEVAASTPEKIVSFSVDPASGLSDFHGRRVAFALGLEGAQVKQCVQLVKNLYRAFVEKDMEMLEINPLIVMTDGNLKVLDAKVGFDNNALYRQSDVMALRDETEEDPKELAASKFDLNYIALDGEIGCMVNGAGLAMATMDIIKLYGAEPANFLDVGGGATKEKVTEAFKIITSDPNVKGILVNIFGGIMRCDIIAEGIIAAVKEVGLQVPLVVRLEGTNVEKGKEIIANSGLNVIAGDNLSDAAQKIVKAVKG</sequence>
<evidence type="ECO:0000255" key="1">
    <source>
        <dbReference type="HAMAP-Rule" id="MF_00558"/>
    </source>
</evidence>
<proteinExistence type="inferred from homology"/>
<reference key="1">
    <citation type="submission" date="2007-02" db="EMBL/GenBank/DDBJ databases">
        <title>Complete sequence of chromosome 1 of Rhodobacter sphaeroides ATCC 17029.</title>
        <authorList>
            <person name="Copeland A."/>
            <person name="Lucas S."/>
            <person name="Lapidus A."/>
            <person name="Barry K."/>
            <person name="Detter J.C."/>
            <person name="Glavina del Rio T."/>
            <person name="Hammon N."/>
            <person name="Israni S."/>
            <person name="Dalin E."/>
            <person name="Tice H."/>
            <person name="Pitluck S."/>
            <person name="Kiss H."/>
            <person name="Brettin T."/>
            <person name="Bruce D."/>
            <person name="Han C."/>
            <person name="Tapia R."/>
            <person name="Gilna P."/>
            <person name="Schmutz J."/>
            <person name="Larimer F."/>
            <person name="Land M."/>
            <person name="Hauser L."/>
            <person name="Kyrpides N."/>
            <person name="Mikhailova N."/>
            <person name="Richardson P."/>
            <person name="Mackenzie C."/>
            <person name="Choudhary M."/>
            <person name="Donohue T.J."/>
            <person name="Kaplan S."/>
        </authorList>
    </citation>
    <scope>NUCLEOTIDE SEQUENCE [LARGE SCALE GENOMIC DNA]</scope>
    <source>
        <strain>ATCC 17029 / ATH 2.4.9</strain>
    </source>
</reference>
<comment type="function">
    <text evidence="1">Succinyl-CoA synthetase functions in the citric acid cycle (TCA), coupling the hydrolysis of succinyl-CoA to the synthesis of either ATP or GTP and thus represents the only step of substrate-level phosphorylation in the TCA. The beta subunit provides nucleotide specificity of the enzyme and binds the substrate succinate, while the binding sites for coenzyme A and phosphate are found in the alpha subunit.</text>
</comment>
<comment type="catalytic activity">
    <reaction evidence="1">
        <text>succinate + ATP + CoA = succinyl-CoA + ADP + phosphate</text>
        <dbReference type="Rhea" id="RHEA:17661"/>
        <dbReference type="ChEBI" id="CHEBI:30031"/>
        <dbReference type="ChEBI" id="CHEBI:30616"/>
        <dbReference type="ChEBI" id="CHEBI:43474"/>
        <dbReference type="ChEBI" id="CHEBI:57287"/>
        <dbReference type="ChEBI" id="CHEBI:57292"/>
        <dbReference type="ChEBI" id="CHEBI:456216"/>
        <dbReference type="EC" id="6.2.1.5"/>
    </reaction>
    <physiologicalReaction direction="right-to-left" evidence="1">
        <dbReference type="Rhea" id="RHEA:17663"/>
    </physiologicalReaction>
</comment>
<comment type="catalytic activity">
    <reaction evidence="1">
        <text>GTP + succinate + CoA = succinyl-CoA + GDP + phosphate</text>
        <dbReference type="Rhea" id="RHEA:22120"/>
        <dbReference type="ChEBI" id="CHEBI:30031"/>
        <dbReference type="ChEBI" id="CHEBI:37565"/>
        <dbReference type="ChEBI" id="CHEBI:43474"/>
        <dbReference type="ChEBI" id="CHEBI:57287"/>
        <dbReference type="ChEBI" id="CHEBI:57292"/>
        <dbReference type="ChEBI" id="CHEBI:58189"/>
    </reaction>
    <physiologicalReaction direction="right-to-left" evidence="1">
        <dbReference type="Rhea" id="RHEA:22122"/>
    </physiologicalReaction>
</comment>
<comment type="cofactor">
    <cofactor evidence="1">
        <name>Mg(2+)</name>
        <dbReference type="ChEBI" id="CHEBI:18420"/>
    </cofactor>
    <text evidence="1">Binds 1 Mg(2+) ion per subunit.</text>
</comment>
<comment type="pathway">
    <text evidence="1">Carbohydrate metabolism; tricarboxylic acid cycle; succinate from succinyl-CoA (ligase route): step 1/1.</text>
</comment>
<comment type="subunit">
    <text evidence="1">Heterotetramer of two alpha and two beta subunits.</text>
</comment>
<comment type="similarity">
    <text evidence="1">Belongs to the succinate/malate CoA ligase beta subunit family.</text>
</comment>
<name>SUCC_CERS1</name>